<organism>
    <name type="scientific">Brachyspira hyodysenteriae (strain ATCC 49526 / WA1)</name>
    <dbReference type="NCBI Taxonomy" id="565034"/>
    <lineage>
        <taxon>Bacteria</taxon>
        <taxon>Pseudomonadati</taxon>
        <taxon>Spirochaetota</taxon>
        <taxon>Spirochaetia</taxon>
        <taxon>Brachyspirales</taxon>
        <taxon>Brachyspiraceae</taxon>
        <taxon>Brachyspira</taxon>
    </lineage>
</organism>
<name>RLME_BRAHW</name>
<evidence type="ECO:0000255" key="1">
    <source>
        <dbReference type="HAMAP-Rule" id="MF_01547"/>
    </source>
</evidence>
<accession>C0QX75</accession>
<feature type="chain" id="PRO_1000215449" description="Ribosomal RNA large subunit methyltransferase E">
    <location>
        <begin position="1"/>
        <end position="193"/>
    </location>
</feature>
<feature type="active site" description="Proton acceptor" evidence="1">
    <location>
        <position position="146"/>
    </location>
</feature>
<feature type="binding site" evidence="1">
    <location>
        <position position="49"/>
    </location>
    <ligand>
        <name>S-adenosyl-L-methionine</name>
        <dbReference type="ChEBI" id="CHEBI:59789"/>
    </ligand>
</feature>
<feature type="binding site" evidence="1">
    <location>
        <position position="51"/>
    </location>
    <ligand>
        <name>S-adenosyl-L-methionine</name>
        <dbReference type="ChEBI" id="CHEBI:59789"/>
    </ligand>
</feature>
<feature type="binding site" evidence="1">
    <location>
        <position position="69"/>
    </location>
    <ligand>
        <name>S-adenosyl-L-methionine</name>
        <dbReference type="ChEBI" id="CHEBI:59789"/>
    </ligand>
</feature>
<feature type="binding site" evidence="1">
    <location>
        <position position="86"/>
    </location>
    <ligand>
        <name>S-adenosyl-L-methionine</name>
        <dbReference type="ChEBI" id="CHEBI:59789"/>
    </ligand>
</feature>
<feature type="binding site" evidence="1">
    <location>
        <position position="106"/>
    </location>
    <ligand>
        <name>S-adenosyl-L-methionine</name>
        <dbReference type="ChEBI" id="CHEBI:59789"/>
    </ligand>
</feature>
<protein>
    <recommendedName>
        <fullName evidence="1">Ribosomal RNA large subunit methyltransferase E</fullName>
        <ecNumber evidence="1">2.1.1.166</ecNumber>
    </recommendedName>
    <alternativeName>
        <fullName evidence="1">23S rRNA Um2552 methyltransferase</fullName>
    </alternativeName>
    <alternativeName>
        <fullName evidence="1">rRNA (uridine-2'-O-)-methyltransferase</fullName>
    </alternativeName>
</protein>
<sequence>MKKVQDFYFKKAKEENYKARSVFKLEEAQNKFKFIKASDNVLDVGCSPGSFSQYMLNKILKSGSVVGVDILPNSFAHQRFTFILGDIKDMDVTTFNNTLFDVVVSDAMPNTTSDRETNHFRSISLCRSIFDLAKEVLKENGNFFIKVFDGKDLQDFKKELSEYFNSVNVFKPKSSRDESREIFLFCKNFKKLR</sequence>
<reference key="1">
    <citation type="journal article" date="2009" name="PLoS ONE">
        <title>Genome sequence of the pathogenic intestinal spirochete Brachyspira hyodysenteriae reveals adaptations to its lifestyle in the porcine large intestine.</title>
        <authorList>
            <person name="Bellgard M.I."/>
            <person name="Wanchanthuek P."/>
            <person name="La T."/>
            <person name="Ryan K."/>
            <person name="Moolhuijzen P."/>
            <person name="Albertyn Z."/>
            <person name="Shaban B."/>
            <person name="Motro Y."/>
            <person name="Dunn D.S."/>
            <person name="Schibeci D."/>
            <person name="Hunter A."/>
            <person name="Barrero R."/>
            <person name="Phillips N.D."/>
            <person name="Hampson D.J."/>
        </authorList>
    </citation>
    <scope>NUCLEOTIDE SEQUENCE [LARGE SCALE GENOMIC DNA]</scope>
    <source>
        <strain>ATCC 49526 / WA1</strain>
    </source>
</reference>
<dbReference type="EC" id="2.1.1.166" evidence="1"/>
<dbReference type="EMBL" id="CP001357">
    <property type="protein sequence ID" value="ACN82733.1"/>
    <property type="molecule type" value="Genomic_DNA"/>
</dbReference>
<dbReference type="RefSeq" id="WP_012669786.1">
    <property type="nucleotide sequence ID" value="NC_012225.1"/>
</dbReference>
<dbReference type="SMR" id="C0QX75"/>
<dbReference type="STRING" id="565034.BHWA1_00233"/>
<dbReference type="KEGG" id="bhy:BHWA1_00233"/>
<dbReference type="eggNOG" id="COG0293">
    <property type="taxonomic scope" value="Bacteria"/>
</dbReference>
<dbReference type="HOGENOM" id="CLU_009422_4_4_12"/>
<dbReference type="Proteomes" id="UP000001803">
    <property type="component" value="Chromosome"/>
</dbReference>
<dbReference type="GO" id="GO:0005737">
    <property type="term" value="C:cytoplasm"/>
    <property type="evidence" value="ECO:0007669"/>
    <property type="project" value="UniProtKB-SubCell"/>
</dbReference>
<dbReference type="GO" id="GO:0008650">
    <property type="term" value="F:rRNA (uridine-2'-O-)-methyltransferase activity"/>
    <property type="evidence" value="ECO:0007669"/>
    <property type="project" value="UniProtKB-UniRule"/>
</dbReference>
<dbReference type="CDD" id="cd02440">
    <property type="entry name" value="AdoMet_MTases"/>
    <property type="match status" value="1"/>
</dbReference>
<dbReference type="Gene3D" id="3.40.50.150">
    <property type="entry name" value="Vaccinia Virus protein VP39"/>
    <property type="match status" value="1"/>
</dbReference>
<dbReference type="HAMAP" id="MF_01547">
    <property type="entry name" value="RNA_methyltr_E"/>
    <property type="match status" value="1"/>
</dbReference>
<dbReference type="InterPro" id="IPR050082">
    <property type="entry name" value="RNA_methyltr_RlmE"/>
</dbReference>
<dbReference type="InterPro" id="IPR002877">
    <property type="entry name" value="RNA_MeTrfase_FtsJ_dom"/>
</dbReference>
<dbReference type="InterPro" id="IPR015507">
    <property type="entry name" value="rRNA-MeTfrase_E"/>
</dbReference>
<dbReference type="InterPro" id="IPR029063">
    <property type="entry name" value="SAM-dependent_MTases_sf"/>
</dbReference>
<dbReference type="PANTHER" id="PTHR10920">
    <property type="entry name" value="RIBOSOMAL RNA METHYLTRANSFERASE"/>
    <property type="match status" value="1"/>
</dbReference>
<dbReference type="PANTHER" id="PTHR10920:SF18">
    <property type="entry name" value="RRNA METHYLTRANSFERASE 2, MITOCHONDRIAL"/>
    <property type="match status" value="1"/>
</dbReference>
<dbReference type="Pfam" id="PF01728">
    <property type="entry name" value="FtsJ"/>
    <property type="match status" value="1"/>
</dbReference>
<dbReference type="PIRSF" id="PIRSF005461">
    <property type="entry name" value="23S_rRNA_mtase"/>
    <property type="match status" value="1"/>
</dbReference>
<dbReference type="SUPFAM" id="SSF53335">
    <property type="entry name" value="S-adenosyl-L-methionine-dependent methyltransferases"/>
    <property type="match status" value="1"/>
</dbReference>
<gene>
    <name evidence="1" type="primary">rlmE</name>
    <name evidence="1" type="synonym">ftsJ</name>
    <name evidence="1" type="synonym">rrmJ</name>
    <name type="ordered locus">BHWA1_00233</name>
</gene>
<proteinExistence type="inferred from homology"/>
<keyword id="KW-0963">Cytoplasm</keyword>
<keyword id="KW-0489">Methyltransferase</keyword>
<keyword id="KW-0698">rRNA processing</keyword>
<keyword id="KW-0949">S-adenosyl-L-methionine</keyword>
<keyword id="KW-0808">Transferase</keyword>
<comment type="function">
    <text evidence="1">Specifically methylates the uridine in position 2552 of 23S rRNA at the 2'-O position of the ribose in the fully assembled 50S ribosomal subunit.</text>
</comment>
<comment type="catalytic activity">
    <reaction evidence="1">
        <text>uridine(2552) in 23S rRNA + S-adenosyl-L-methionine = 2'-O-methyluridine(2552) in 23S rRNA + S-adenosyl-L-homocysteine + H(+)</text>
        <dbReference type="Rhea" id="RHEA:42720"/>
        <dbReference type="Rhea" id="RHEA-COMP:10202"/>
        <dbReference type="Rhea" id="RHEA-COMP:10203"/>
        <dbReference type="ChEBI" id="CHEBI:15378"/>
        <dbReference type="ChEBI" id="CHEBI:57856"/>
        <dbReference type="ChEBI" id="CHEBI:59789"/>
        <dbReference type="ChEBI" id="CHEBI:65315"/>
        <dbReference type="ChEBI" id="CHEBI:74478"/>
        <dbReference type="EC" id="2.1.1.166"/>
    </reaction>
</comment>
<comment type="subcellular location">
    <subcellularLocation>
        <location evidence="1">Cytoplasm</location>
    </subcellularLocation>
</comment>
<comment type="similarity">
    <text evidence="1">Belongs to the class I-like SAM-binding methyltransferase superfamily. RNA methyltransferase RlmE family.</text>
</comment>